<accession>Q5REY7</accession>
<accession>Q5RBE2</accession>
<reference key="1">
    <citation type="submission" date="2004-11" db="EMBL/GenBank/DDBJ databases">
        <authorList>
            <consortium name="The German cDNA consortium"/>
        </authorList>
    </citation>
    <scope>NUCLEOTIDE SEQUENCE [LARGE SCALE MRNA]</scope>
    <source>
        <tissue>Heart</tissue>
        <tissue>Kidney</tissue>
    </source>
</reference>
<protein>
    <recommendedName>
        <fullName>UBX domain-containing protein 7</fullName>
    </recommendedName>
</protein>
<gene>
    <name type="primary">UBXN7</name>
    <name type="synonym">UBXD7</name>
</gene>
<keyword id="KW-0007">Acetylation</keyword>
<keyword id="KW-1017">Isopeptide bond</keyword>
<keyword id="KW-0539">Nucleus</keyword>
<keyword id="KW-0597">Phosphoprotein</keyword>
<keyword id="KW-1185">Reference proteome</keyword>
<keyword id="KW-0832">Ubl conjugation</keyword>
<dbReference type="EMBL" id="CR857376">
    <property type="protein sequence ID" value="CAH89670.1"/>
    <property type="molecule type" value="mRNA"/>
</dbReference>
<dbReference type="EMBL" id="CR858709">
    <property type="protein sequence ID" value="CAH90918.1"/>
    <property type="molecule type" value="mRNA"/>
</dbReference>
<dbReference type="RefSeq" id="NP_001125524.1">
    <property type="nucleotide sequence ID" value="NM_001132052.1"/>
</dbReference>
<dbReference type="SMR" id="Q5REY7"/>
<dbReference type="FunCoup" id="Q5REY7">
    <property type="interactions" value="4468"/>
</dbReference>
<dbReference type="STRING" id="9601.ENSPPYP00000016149"/>
<dbReference type="Ensembl" id="ENSPPYT00000046529.1">
    <property type="protein sequence ID" value="ENSPPYP00000028144.1"/>
    <property type="gene ID" value="ENSPPYG00000038112.1"/>
</dbReference>
<dbReference type="GeneID" id="100172436"/>
<dbReference type="KEGG" id="pon:100172436"/>
<dbReference type="CTD" id="26043"/>
<dbReference type="eggNOG" id="KOG0260">
    <property type="taxonomic scope" value="Eukaryota"/>
</dbReference>
<dbReference type="eggNOG" id="KOG1364">
    <property type="taxonomic scope" value="Eukaryota"/>
</dbReference>
<dbReference type="GeneTree" id="ENSGT00390000018687"/>
<dbReference type="HOGENOM" id="CLU_021255_3_0_1"/>
<dbReference type="InParanoid" id="Q5REY7"/>
<dbReference type="OMA" id="CAFPRKS"/>
<dbReference type="OrthoDB" id="270602at2759"/>
<dbReference type="TreeFam" id="TF323635"/>
<dbReference type="Proteomes" id="UP000001595">
    <property type="component" value="Unplaced"/>
</dbReference>
<dbReference type="GO" id="GO:0005654">
    <property type="term" value="C:nucleoplasm"/>
    <property type="evidence" value="ECO:0007669"/>
    <property type="project" value="Ensembl"/>
</dbReference>
<dbReference type="GO" id="GO:0034098">
    <property type="term" value="C:VCP-NPL4-UFD1 AAA ATPase complex"/>
    <property type="evidence" value="ECO:0007669"/>
    <property type="project" value="Ensembl"/>
</dbReference>
<dbReference type="GO" id="GO:0061629">
    <property type="term" value="F:RNA polymerase II-specific DNA-binding transcription factor binding"/>
    <property type="evidence" value="ECO:0007669"/>
    <property type="project" value="Ensembl"/>
</dbReference>
<dbReference type="GO" id="GO:0043130">
    <property type="term" value="F:ubiquitin binding"/>
    <property type="evidence" value="ECO:0007669"/>
    <property type="project" value="Ensembl"/>
</dbReference>
<dbReference type="GO" id="GO:0031625">
    <property type="term" value="F:ubiquitin protein ligase binding"/>
    <property type="evidence" value="ECO:0007669"/>
    <property type="project" value="Ensembl"/>
</dbReference>
<dbReference type="GO" id="GO:0043161">
    <property type="term" value="P:proteasome-mediated ubiquitin-dependent protein catabolic process"/>
    <property type="evidence" value="ECO:0007669"/>
    <property type="project" value="TreeGrafter"/>
</dbReference>
<dbReference type="CDD" id="cd02958">
    <property type="entry name" value="UAS"/>
    <property type="match status" value="1"/>
</dbReference>
<dbReference type="CDD" id="cd14345">
    <property type="entry name" value="UBA_UBXD7"/>
    <property type="match status" value="1"/>
</dbReference>
<dbReference type="CDD" id="cd01773">
    <property type="entry name" value="UBX_UBXN7"/>
    <property type="match status" value="1"/>
</dbReference>
<dbReference type="FunFam" id="3.10.20.90:FF:000097">
    <property type="entry name" value="UBX domain-containing protein 7"/>
    <property type="match status" value="1"/>
</dbReference>
<dbReference type="FunFam" id="3.40.30.10:FF:000079">
    <property type="entry name" value="UBX domain-containing protein 7"/>
    <property type="match status" value="1"/>
</dbReference>
<dbReference type="Gene3D" id="1.10.8.10">
    <property type="entry name" value="DNA helicase RuvA subunit, C-terminal domain"/>
    <property type="match status" value="1"/>
</dbReference>
<dbReference type="Gene3D" id="3.40.30.10">
    <property type="entry name" value="Glutaredoxin"/>
    <property type="match status" value="1"/>
</dbReference>
<dbReference type="Gene3D" id="3.10.20.90">
    <property type="entry name" value="Phosphatidylinositol 3-kinase Catalytic Subunit, Chain A, domain 1"/>
    <property type="match status" value="1"/>
</dbReference>
<dbReference type="InterPro" id="IPR036249">
    <property type="entry name" value="Thioredoxin-like_sf"/>
</dbReference>
<dbReference type="InterPro" id="IPR006577">
    <property type="entry name" value="UAS"/>
</dbReference>
<dbReference type="InterPro" id="IPR009060">
    <property type="entry name" value="UBA-like_sf"/>
</dbReference>
<dbReference type="InterPro" id="IPR054109">
    <property type="entry name" value="UBA_8"/>
</dbReference>
<dbReference type="InterPro" id="IPR029071">
    <property type="entry name" value="Ubiquitin-like_domsf"/>
</dbReference>
<dbReference type="InterPro" id="IPR017346">
    <property type="entry name" value="UBX_7/2"/>
</dbReference>
<dbReference type="InterPro" id="IPR001012">
    <property type="entry name" value="UBX_dom"/>
</dbReference>
<dbReference type="InterPro" id="IPR050730">
    <property type="entry name" value="UBX_domain-protein"/>
</dbReference>
<dbReference type="PANTHER" id="PTHR23322">
    <property type="entry name" value="FAS-ASSOCIATED PROTEIN"/>
    <property type="match status" value="1"/>
</dbReference>
<dbReference type="PANTHER" id="PTHR23322:SF6">
    <property type="entry name" value="UBX DOMAIN-CONTAINING PROTEIN 7"/>
    <property type="match status" value="1"/>
</dbReference>
<dbReference type="Pfam" id="PF13899">
    <property type="entry name" value="Thioredoxin_7"/>
    <property type="match status" value="1"/>
</dbReference>
<dbReference type="Pfam" id="PF22566">
    <property type="entry name" value="UBA_8"/>
    <property type="match status" value="1"/>
</dbReference>
<dbReference type="Pfam" id="PF00789">
    <property type="entry name" value="UBX"/>
    <property type="match status" value="1"/>
</dbReference>
<dbReference type="PIRSF" id="PIRSF037991">
    <property type="entry name" value="UCP037991_UBX7/2"/>
    <property type="match status" value="1"/>
</dbReference>
<dbReference type="SMART" id="SM00594">
    <property type="entry name" value="UAS"/>
    <property type="match status" value="1"/>
</dbReference>
<dbReference type="SMART" id="SM00166">
    <property type="entry name" value="UBX"/>
    <property type="match status" value="1"/>
</dbReference>
<dbReference type="SUPFAM" id="SSF52833">
    <property type="entry name" value="Thioredoxin-like"/>
    <property type="match status" value="1"/>
</dbReference>
<dbReference type="SUPFAM" id="SSF46934">
    <property type="entry name" value="UBA-like"/>
    <property type="match status" value="1"/>
</dbReference>
<dbReference type="SUPFAM" id="SSF54236">
    <property type="entry name" value="Ubiquitin-like"/>
    <property type="match status" value="1"/>
</dbReference>
<dbReference type="PROSITE" id="PS50033">
    <property type="entry name" value="UBX"/>
    <property type="match status" value="1"/>
</dbReference>
<name>UBXN7_PONAB</name>
<comment type="function">
    <text evidence="1">Ubiquitin-binding adapter that links a subset of NEDD8-associated cullin ring ligases (CRLs) to the segregase VCP/p97, to regulate turnover of their ubiquitination substrates (By similarity).</text>
</comment>
<comment type="subunit">
    <text evidence="1">Interacts with neddylated CUL2, ubiquitinated HIF1A, and VCP/p97.</text>
</comment>
<comment type="subcellular location">
    <subcellularLocation>
        <location evidence="1">Nucleus</location>
    </subcellularLocation>
</comment>
<comment type="domain">
    <text evidence="1">The UIM (ubiquitin-interacting motif) is required to engage the NEDD8 modification on cullins.</text>
</comment>
<comment type="domain">
    <text evidence="1">The UBX domain mediates interaction with VCP/p97.</text>
</comment>
<comment type="domain">
    <text evidence="1">The UBA domain is required for binding ubiquitinated-protein substrates.</text>
</comment>
<sequence>MAAHGGSAASSALKGLIQQFTTITGASESVGKHMLEACNNNLEMAVTMFLDGGGIAEEPSTSSASVSTVRPHTEEEVRAPIPQKQEILVEPEPLFGAPKRRRPARSIFDGFRDFQTETIRQEQELRNGGAIDKKLTTLADLFRPPIDLMHKGSFETAKECGQMQNKWLMINIQNVQDFACQCLNRDVWSNEAVKNIIREHFIFWQVYHDSEEGQRYIQFYKLGDFPYVSILDPRTGQKLVEWHQLDVSSFLDQVTGFLGEHGQLDGLSSSPPKKCARSESLIDASEDSQLEAAIRASLQETHFDSTQTKQDSRSDEESESELFSGSEEFISVCGSDEEEEVENLAKSRKSPHKDLGHRKEENRRPLTEPPVRTDPGTATNHQGLPAVDSEILEMPPEKADGVVEGIDVNGPKAQLMLRYPDGKREQITLPEQAKLLALVKHVQSKGYPNERFELLTNFPRRKLSHLDYDITLQEAGLCPQETVFVQERN</sequence>
<feature type="initiator methionine" description="Removed" evidence="1">
    <location>
        <position position="1"/>
    </location>
</feature>
<feature type="chain" id="PRO_0000211037" description="UBX domain-containing protein 7">
    <location>
        <begin position="2"/>
        <end position="489"/>
    </location>
</feature>
<feature type="domain" description="UBA">
    <location>
        <begin position="2"/>
        <end position="54"/>
    </location>
</feature>
<feature type="repeat" description="ubiquitin-interacting motif (UIM)">
    <location>
        <begin position="285"/>
        <end position="304"/>
    </location>
</feature>
<feature type="domain" description="UBX" evidence="2">
    <location>
        <begin position="408"/>
        <end position="485"/>
    </location>
</feature>
<feature type="region of interest" description="Disordered" evidence="3">
    <location>
        <begin position="56"/>
        <end position="77"/>
    </location>
</feature>
<feature type="region of interest" description="Disordered" evidence="3">
    <location>
        <begin position="300"/>
        <end position="384"/>
    </location>
</feature>
<feature type="compositionally biased region" description="Polar residues" evidence="3">
    <location>
        <begin position="59"/>
        <end position="70"/>
    </location>
</feature>
<feature type="compositionally biased region" description="Polar residues" evidence="3">
    <location>
        <begin position="300"/>
        <end position="309"/>
    </location>
</feature>
<feature type="compositionally biased region" description="Basic and acidic residues" evidence="3">
    <location>
        <begin position="352"/>
        <end position="366"/>
    </location>
</feature>
<feature type="modified residue" description="N-acetylalanine" evidence="1">
    <location>
        <position position="2"/>
    </location>
</feature>
<feature type="modified residue" description="Phosphoserine" evidence="1">
    <location>
        <position position="278"/>
    </location>
</feature>
<feature type="modified residue" description="Phosphoserine" evidence="1">
    <location>
        <position position="280"/>
    </location>
</feature>
<feature type="modified residue" description="Phosphoserine" evidence="1">
    <location>
        <position position="285"/>
    </location>
</feature>
<feature type="modified residue" description="Phosphoserine" evidence="1">
    <location>
        <position position="288"/>
    </location>
</feature>
<feature type="modified residue" description="Phosphothreonine" evidence="1">
    <location>
        <position position="306"/>
    </location>
</feature>
<feature type="cross-link" description="Glycyl lysine isopeptide (Lys-Gly) (interchain with G-Cter in SUMO2)" evidence="1">
    <location>
        <position position="84"/>
    </location>
</feature>
<feature type="cross-link" description="Glycyl lysine isopeptide (Lys-Gly) (interchain with G-Cter in ubiquitin)" evidence="1">
    <location>
        <position position="99"/>
    </location>
</feature>
<feature type="cross-link" description="Glycyl lysine isopeptide (Lys-Gly) (interchain with G-Cter in SUMO2)" evidence="1">
    <location>
        <position position="134"/>
    </location>
</feature>
<feature type="sequence conflict" description="In Ref. 1; CAH90918." evidence="4" ref="1">
    <original>E</original>
    <variation>V</variation>
    <location>
        <position position="211"/>
    </location>
</feature>
<feature type="sequence conflict" description="In Ref. 1; CAH89670." evidence="4" ref="1">
    <original>D</original>
    <variation>G</variation>
    <location>
        <position position="311"/>
    </location>
</feature>
<evidence type="ECO:0000250" key="1">
    <source>
        <dbReference type="UniProtKB" id="O94888"/>
    </source>
</evidence>
<evidence type="ECO:0000255" key="2">
    <source>
        <dbReference type="PROSITE-ProRule" id="PRU00215"/>
    </source>
</evidence>
<evidence type="ECO:0000256" key="3">
    <source>
        <dbReference type="SAM" id="MobiDB-lite"/>
    </source>
</evidence>
<evidence type="ECO:0000305" key="4"/>
<organism>
    <name type="scientific">Pongo abelii</name>
    <name type="common">Sumatran orangutan</name>
    <name type="synonym">Pongo pygmaeus abelii</name>
    <dbReference type="NCBI Taxonomy" id="9601"/>
    <lineage>
        <taxon>Eukaryota</taxon>
        <taxon>Metazoa</taxon>
        <taxon>Chordata</taxon>
        <taxon>Craniata</taxon>
        <taxon>Vertebrata</taxon>
        <taxon>Euteleostomi</taxon>
        <taxon>Mammalia</taxon>
        <taxon>Eutheria</taxon>
        <taxon>Euarchontoglires</taxon>
        <taxon>Primates</taxon>
        <taxon>Haplorrhini</taxon>
        <taxon>Catarrhini</taxon>
        <taxon>Hominidae</taxon>
        <taxon>Pongo</taxon>
    </lineage>
</organism>
<proteinExistence type="evidence at transcript level"/>